<reference key="1">
    <citation type="journal article" date="1997" name="Nature">
        <title>The nucleotide sequence of Saccharomyces cerevisiae chromosome IV.</title>
        <authorList>
            <person name="Jacq C."/>
            <person name="Alt-Moerbe J."/>
            <person name="Andre B."/>
            <person name="Arnold W."/>
            <person name="Bahr A."/>
            <person name="Ballesta J.P.G."/>
            <person name="Bargues M."/>
            <person name="Baron L."/>
            <person name="Becker A."/>
            <person name="Biteau N."/>
            <person name="Bloecker H."/>
            <person name="Blugeon C."/>
            <person name="Boskovic J."/>
            <person name="Brandt P."/>
            <person name="Brueckner M."/>
            <person name="Buitrago M.J."/>
            <person name="Coster F."/>
            <person name="Delaveau T."/>
            <person name="del Rey F."/>
            <person name="Dujon B."/>
            <person name="Eide L.G."/>
            <person name="Garcia-Cantalejo J.M."/>
            <person name="Goffeau A."/>
            <person name="Gomez-Peris A."/>
            <person name="Granotier C."/>
            <person name="Hanemann V."/>
            <person name="Hankeln T."/>
            <person name="Hoheisel J.D."/>
            <person name="Jaeger W."/>
            <person name="Jimenez A."/>
            <person name="Jonniaux J.-L."/>
            <person name="Kraemer C."/>
            <person name="Kuester H."/>
            <person name="Laamanen P."/>
            <person name="Legros Y."/>
            <person name="Louis E.J."/>
            <person name="Moeller-Rieker S."/>
            <person name="Monnet A."/>
            <person name="Moro M."/>
            <person name="Mueller-Auer S."/>
            <person name="Nussbaumer B."/>
            <person name="Paricio N."/>
            <person name="Paulin L."/>
            <person name="Perea J."/>
            <person name="Perez-Alonso M."/>
            <person name="Perez-Ortin J.E."/>
            <person name="Pohl T.M."/>
            <person name="Prydz H."/>
            <person name="Purnelle B."/>
            <person name="Rasmussen S.W."/>
            <person name="Remacha M.A."/>
            <person name="Revuelta J.L."/>
            <person name="Rieger M."/>
            <person name="Salom D."/>
            <person name="Saluz H.P."/>
            <person name="Saiz J.E."/>
            <person name="Saren A.-M."/>
            <person name="Schaefer M."/>
            <person name="Scharfe M."/>
            <person name="Schmidt E.R."/>
            <person name="Schneider C."/>
            <person name="Scholler P."/>
            <person name="Schwarz S."/>
            <person name="Soler-Mira A."/>
            <person name="Urrestarazu L.A."/>
            <person name="Verhasselt P."/>
            <person name="Vissers S."/>
            <person name="Voet M."/>
            <person name="Volckaert G."/>
            <person name="Wagner G."/>
            <person name="Wambutt R."/>
            <person name="Wedler E."/>
            <person name="Wedler H."/>
            <person name="Woelfl S."/>
            <person name="Harris D.E."/>
            <person name="Bowman S."/>
            <person name="Brown D."/>
            <person name="Churcher C.M."/>
            <person name="Connor R."/>
            <person name="Dedman K."/>
            <person name="Gentles S."/>
            <person name="Hamlin N."/>
            <person name="Hunt S."/>
            <person name="Jones L."/>
            <person name="McDonald S."/>
            <person name="Murphy L.D."/>
            <person name="Niblett D."/>
            <person name="Odell C."/>
            <person name="Oliver K."/>
            <person name="Rajandream M.A."/>
            <person name="Richards C."/>
            <person name="Shore L."/>
            <person name="Walsh S.V."/>
            <person name="Barrell B.G."/>
            <person name="Dietrich F.S."/>
            <person name="Mulligan J.T."/>
            <person name="Allen E."/>
            <person name="Araujo R."/>
            <person name="Aviles E."/>
            <person name="Berno A."/>
            <person name="Carpenter J."/>
            <person name="Chen E."/>
            <person name="Cherry J.M."/>
            <person name="Chung E."/>
            <person name="Duncan M."/>
            <person name="Hunicke-Smith S."/>
            <person name="Hyman R.W."/>
            <person name="Komp C."/>
            <person name="Lashkari D."/>
            <person name="Lew H."/>
            <person name="Lin D."/>
            <person name="Mosedale D."/>
            <person name="Nakahara K."/>
            <person name="Namath A."/>
            <person name="Oefner P."/>
            <person name="Oh C."/>
            <person name="Petel F.X."/>
            <person name="Roberts D."/>
            <person name="Schramm S."/>
            <person name="Schroeder M."/>
            <person name="Shogren T."/>
            <person name="Shroff N."/>
            <person name="Winant A."/>
            <person name="Yelton M.A."/>
            <person name="Botstein D."/>
            <person name="Davis R.W."/>
            <person name="Johnston M."/>
            <person name="Andrews S."/>
            <person name="Brinkman R."/>
            <person name="Cooper J."/>
            <person name="Ding H."/>
            <person name="Du Z."/>
            <person name="Favello A."/>
            <person name="Fulton L."/>
            <person name="Gattung S."/>
            <person name="Greco T."/>
            <person name="Hallsworth K."/>
            <person name="Hawkins J."/>
            <person name="Hillier L.W."/>
            <person name="Jier M."/>
            <person name="Johnson D."/>
            <person name="Johnston L."/>
            <person name="Kirsten J."/>
            <person name="Kucaba T."/>
            <person name="Langston Y."/>
            <person name="Latreille P."/>
            <person name="Le T."/>
            <person name="Mardis E."/>
            <person name="Menezes S."/>
            <person name="Miller N."/>
            <person name="Nhan M."/>
            <person name="Pauley A."/>
            <person name="Peluso D."/>
            <person name="Rifkin L."/>
            <person name="Riles L."/>
            <person name="Taich A."/>
            <person name="Trevaskis E."/>
            <person name="Vignati D."/>
            <person name="Wilcox L."/>
            <person name="Wohldman P."/>
            <person name="Vaudin M."/>
            <person name="Wilson R."/>
            <person name="Waterston R."/>
            <person name="Albermann K."/>
            <person name="Hani J."/>
            <person name="Heumann K."/>
            <person name="Kleine K."/>
            <person name="Mewes H.-W."/>
            <person name="Zollner A."/>
            <person name="Zaccaria P."/>
        </authorList>
    </citation>
    <scope>NUCLEOTIDE SEQUENCE [LARGE SCALE GENOMIC DNA]</scope>
    <source>
        <strain>ATCC 204508 / S288c</strain>
    </source>
</reference>
<reference key="2">
    <citation type="submission" date="2003-10" db="EMBL/GenBank/DDBJ databases">
        <authorList>
            <person name="Sethuraman A."/>
            <person name="Cherry J.M."/>
        </authorList>
    </citation>
    <scope>SEQUENCE REVISION</scope>
</reference>
<reference key="3">
    <citation type="journal article" date="2014" name="G3 (Bethesda)">
        <title>The reference genome sequence of Saccharomyces cerevisiae: Then and now.</title>
        <authorList>
            <person name="Engel S.R."/>
            <person name="Dietrich F.S."/>
            <person name="Fisk D.G."/>
            <person name="Binkley G."/>
            <person name="Balakrishnan R."/>
            <person name="Costanzo M.C."/>
            <person name="Dwight S.S."/>
            <person name="Hitz B.C."/>
            <person name="Karra K."/>
            <person name="Nash R.S."/>
            <person name="Weng S."/>
            <person name="Wong E.D."/>
            <person name="Lloyd P."/>
            <person name="Skrzypek M.S."/>
            <person name="Miyasato S.R."/>
            <person name="Simison M."/>
            <person name="Cherry J.M."/>
        </authorList>
    </citation>
    <scope>GENOME REANNOTATION</scope>
    <source>
        <strain>ATCC 204508 / S288c</strain>
    </source>
</reference>
<reference key="4">
    <citation type="journal article" date="2007" name="Genome Res.">
        <title>Approaching a complete repository of sequence-verified protein-encoding clones for Saccharomyces cerevisiae.</title>
        <authorList>
            <person name="Hu Y."/>
            <person name="Rolfs A."/>
            <person name="Bhullar B."/>
            <person name="Murthy T.V.S."/>
            <person name="Zhu C."/>
            <person name="Berger M.F."/>
            <person name="Camargo A.A."/>
            <person name="Kelley F."/>
            <person name="McCarron S."/>
            <person name="Jepson D."/>
            <person name="Richardson A."/>
            <person name="Raphael J."/>
            <person name="Moreira D."/>
            <person name="Taycher E."/>
            <person name="Zuo D."/>
            <person name="Mohr S."/>
            <person name="Kane M.F."/>
            <person name="Williamson J."/>
            <person name="Simpson A.J.G."/>
            <person name="Bulyk M.L."/>
            <person name="Harlow E."/>
            <person name="Marsischky G."/>
            <person name="Kolodner R.D."/>
            <person name="LaBaer J."/>
        </authorList>
    </citation>
    <scope>NUCLEOTIDE SEQUENCE [GENOMIC DNA] OF 322-876</scope>
    <source>
        <strain>ATCC 204508 / S288c</strain>
    </source>
</reference>
<reference key="5">
    <citation type="journal article" date="2000" name="FEBS Lett.">
        <title>Genomic exploration of the hemiascomycetous yeasts: 4. The genome of Saccharomyces cerevisiae revisited.</title>
        <authorList>
            <person name="Blandin G."/>
            <person name="Durrens P."/>
            <person name="Tekaia F."/>
            <person name="Aigle M."/>
            <person name="Bolotin-Fukuhara M."/>
            <person name="Bon E."/>
            <person name="Casaregola S."/>
            <person name="de Montigny J."/>
            <person name="Gaillardin C."/>
            <person name="Lepingle A."/>
            <person name="Llorente B."/>
            <person name="Malpertuy A."/>
            <person name="Neuveglise C."/>
            <person name="Ozier-Kalogeropoulos O."/>
            <person name="Perrin A."/>
            <person name="Potier S."/>
            <person name="Souciet J.-L."/>
            <person name="Talla E."/>
            <person name="Toffano-Nioche C."/>
            <person name="Wesolowski-Louvel M."/>
            <person name="Marck C."/>
            <person name="Dujon B."/>
        </authorList>
    </citation>
    <scope>REVISION OF GENE MODEL</scope>
</reference>
<reference key="6">
    <citation type="journal article" date="2005" name="Mol. Cell. Proteomics">
        <title>Quantitative phosphoproteomics applied to the yeast pheromone signaling pathway.</title>
        <authorList>
            <person name="Gruhler A."/>
            <person name="Olsen J.V."/>
            <person name="Mohammed S."/>
            <person name="Mortensen P."/>
            <person name="Faergeman N.J."/>
            <person name="Mann M."/>
            <person name="Jensen O.N."/>
        </authorList>
    </citation>
    <scope>PHOSPHORYLATION [LARGE SCALE ANALYSIS] AT SER-577</scope>
    <scope>IDENTIFICATION BY MASS SPECTROMETRY [LARGE SCALE ANALYSIS]</scope>
    <source>
        <strain>YAL6B</strain>
    </source>
</reference>
<reference key="7">
    <citation type="journal article" date="2008" name="Mol. Cell. Proteomics">
        <title>A multidimensional chromatography technology for in-depth phosphoproteome analysis.</title>
        <authorList>
            <person name="Albuquerque C.P."/>
            <person name="Smolka M.B."/>
            <person name="Payne S.H."/>
            <person name="Bafna V."/>
            <person name="Eng J."/>
            <person name="Zhou H."/>
        </authorList>
    </citation>
    <scope>PHOSPHORYLATION [LARGE SCALE ANALYSIS] AT SER-48; SER-360 AND SER-552</scope>
    <scope>IDENTIFICATION BY MASS SPECTROMETRY [LARGE SCALE ANALYSIS]</scope>
</reference>
<reference key="8">
    <citation type="journal article" date="2009" name="Science">
        <title>Global analysis of Cdk1 substrate phosphorylation sites provides insights into evolution.</title>
        <authorList>
            <person name="Holt L.J."/>
            <person name="Tuch B.B."/>
            <person name="Villen J."/>
            <person name="Johnson A.D."/>
            <person name="Gygi S.P."/>
            <person name="Morgan D.O."/>
        </authorList>
    </citation>
    <scope>PHOSPHORYLATION [LARGE SCALE ANALYSIS] AT SER-48; SER-51; SER-510; SER-552 AND SER-775</scope>
    <scope>IDENTIFICATION BY MASS SPECTROMETRY [LARGE SCALE ANALYSIS]</scope>
</reference>
<sequence>MVVRDQDEALRNSYKYVKLYVRQDQLEDTVDILAKQDEDKSNNDDRRSLASILDSSSSVKKKGKGSNEKYLPCVSFNTVPRSRVSSPLDEEKREFPGVQISADYTMEEYYDDESGFTSDNNADYFSGNSYSSRREGSASPGRYSSPPPASKRNIKIGKMFKISENGKIVREDYPTTPTDINDALVISRAYANWRQLWIKKKNQIDHRLEQKRDFFNYPTILFPPNKKKSSEGATPTIKFNPPIEDGFTPLTKSQKRKERVLSEKVGFPNTPRTILCHISGRKHTWVALDWALRTLIQNTDHIVVLANLPRLTKNNFEDNDSMSERKRMLMMMDDSRSVSSARRSRSRSRSRSICTRRALSLGPEESDNKLKHQNFIEWTSGYTQNEIERKLQDLFDYVTLIIPQDRSVKVTVEILIGKTKKTLLEAINIYLPDFFVSSTLRWERTDSLVRWKSNFLTDKLCTNFPIPTFIVPAKRMFDLEIDLQKEFKEPEVTKQKNTSGPKPGFSHSKSADASIPTISNIKRKQDNDYSIDSLCYAPEANGANNSSREEASDDELNAFKDDENDVMSVKSLTSNISVKEKLCTMARKRRKSMAQQLNDADHDSSIPPGQRHLKKLNIILESSLKFSLEIDSITDSIENGDVDEKRAHSMESGFEELKRVITGGAPPRHVATPQRSMLDVLDNPSSSRSKSKSRSSSKSRIRDKSKPSSPTATDINSSASASRSRSPQIKFASSVKNVDGNAALGAIKSRHSLDSPGDQQQQHHHHHHRDTDQLSVPGLPHLAPSKSYSVSSGNKDSSLRKVSSSSSLRKVKSNDSNSGKRIKKPVVTSAHLKPSSGGGGLFSFFKSKSRSPSSFRKEDESKNTPKRGGLFGFGRL</sequence>
<protein>
    <recommendedName>
        <fullName>Uncharacterized protein JIP4</fullName>
    </recommendedName>
    <alternativeName>
        <fullName>Jumonji-interacting protein 4</fullName>
    </alternativeName>
</protein>
<keyword id="KW-0597">Phosphoprotein</keyword>
<keyword id="KW-1185">Reference proteome</keyword>
<feature type="chain" id="PRO_0000253825" description="Uncharacterized protein JIP4">
    <location>
        <begin position="1"/>
        <end position="876"/>
    </location>
</feature>
<feature type="region of interest" description="Disordered" evidence="1">
    <location>
        <begin position="37"/>
        <end position="67"/>
    </location>
</feature>
<feature type="region of interest" description="Disordered" evidence="1">
    <location>
        <begin position="112"/>
        <end position="155"/>
    </location>
</feature>
<feature type="region of interest" description="Disordered" evidence="1">
    <location>
        <begin position="226"/>
        <end position="254"/>
    </location>
</feature>
<feature type="region of interest" description="Disordered" evidence="1">
    <location>
        <begin position="330"/>
        <end position="353"/>
    </location>
</feature>
<feature type="region of interest" description="Disordered" evidence="1">
    <location>
        <begin position="490"/>
        <end position="513"/>
    </location>
</feature>
<feature type="region of interest" description="Disordered" evidence="1">
    <location>
        <begin position="661"/>
        <end position="728"/>
    </location>
</feature>
<feature type="region of interest" description="Disordered" evidence="1">
    <location>
        <begin position="750"/>
        <end position="876"/>
    </location>
</feature>
<feature type="compositionally biased region" description="Basic and acidic residues" evidence="1">
    <location>
        <begin position="37"/>
        <end position="48"/>
    </location>
</feature>
<feature type="compositionally biased region" description="Low complexity" evidence="1">
    <location>
        <begin position="49"/>
        <end position="58"/>
    </location>
</feature>
<feature type="compositionally biased region" description="Polar residues" evidence="1">
    <location>
        <begin position="115"/>
        <end position="131"/>
    </location>
</feature>
<feature type="compositionally biased region" description="Basic residues" evidence="1">
    <location>
        <begin position="689"/>
        <end position="699"/>
    </location>
</feature>
<feature type="compositionally biased region" description="Low complexity" evidence="1">
    <location>
        <begin position="717"/>
        <end position="726"/>
    </location>
</feature>
<feature type="compositionally biased region" description="Low complexity" evidence="1">
    <location>
        <begin position="794"/>
        <end position="808"/>
    </location>
</feature>
<feature type="compositionally biased region" description="Low complexity" evidence="1">
    <location>
        <begin position="842"/>
        <end position="854"/>
    </location>
</feature>
<feature type="modified residue" description="Phosphoserine" evidence="4 5">
    <location>
        <position position="48"/>
    </location>
</feature>
<feature type="modified residue" description="Phosphoserine" evidence="5">
    <location>
        <position position="51"/>
    </location>
</feature>
<feature type="modified residue" description="Phosphoserine" evidence="4">
    <location>
        <position position="360"/>
    </location>
</feature>
<feature type="modified residue" description="Phosphoserine" evidence="5">
    <location>
        <position position="510"/>
    </location>
</feature>
<feature type="modified residue" description="Phosphoserine" evidence="4 5">
    <location>
        <position position="552"/>
    </location>
</feature>
<feature type="modified residue" description="Phosphoserine" evidence="3">
    <location>
        <position position="577"/>
    </location>
</feature>
<feature type="modified residue" description="Phosphoserine" evidence="5">
    <location>
        <position position="775"/>
    </location>
</feature>
<feature type="sequence conflict" description="In Ref. 4; AAU09710." evidence="2" ref="4">
    <original>S</original>
    <variation>N</variation>
    <location>
        <position position="708"/>
    </location>
</feature>
<organism>
    <name type="scientific">Saccharomyces cerevisiae (strain ATCC 204508 / S288c)</name>
    <name type="common">Baker's yeast</name>
    <dbReference type="NCBI Taxonomy" id="559292"/>
    <lineage>
        <taxon>Eukaryota</taxon>
        <taxon>Fungi</taxon>
        <taxon>Dikarya</taxon>
        <taxon>Ascomycota</taxon>
        <taxon>Saccharomycotina</taxon>
        <taxon>Saccharomycetes</taxon>
        <taxon>Saccharomycetales</taxon>
        <taxon>Saccharomycetaceae</taxon>
        <taxon>Saccharomyces</taxon>
    </lineage>
</organism>
<gene>
    <name type="primary">JIP4</name>
    <name type="ordered locus">YDR475C</name>
    <name type="ORF">YDR474C</name>
</gene>
<dbReference type="EMBL" id="U33050">
    <property type="protein sequence ID" value="AAB64919.2"/>
    <property type="molecule type" value="Genomic_DNA"/>
</dbReference>
<dbReference type="EMBL" id="AY723793">
    <property type="protein sequence ID" value="AAU09710.1"/>
    <property type="molecule type" value="Genomic_DNA"/>
</dbReference>
<dbReference type="EMBL" id="BK006938">
    <property type="protein sequence ID" value="DAA12308.1"/>
    <property type="molecule type" value="Genomic_DNA"/>
</dbReference>
<dbReference type="PIR" id="S69642">
    <property type="entry name" value="S69642"/>
</dbReference>
<dbReference type="RefSeq" id="NP_010763.2">
    <property type="nucleotide sequence ID" value="NM_001180783.1"/>
</dbReference>
<dbReference type="BioGRID" id="32527">
    <property type="interactions" value="85"/>
</dbReference>
<dbReference type="FunCoup" id="Q03361">
    <property type="interactions" value="117"/>
</dbReference>
<dbReference type="IntAct" id="Q03361">
    <property type="interactions" value="6"/>
</dbReference>
<dbReference type="MINT" id="Q03361"/>
<dbReference type="STRING" id="4932.YDR475C"/>
<dbReference type="iPTMnet" id="Q03361"/>
<dbReference type="PaxDb" id="4932-YDR475C"/>
<dbReference type="PeptideAtlas" id="Q03361"/>
<dbReference type="EnsemblFungi" id="YDR475C_mRNA">
    <property type="protein sequence ID" value="YDR475C"/>
    <property type="gene ID" value="YDR475C"/>
</dbReference>
<dbReference type="GeneID" id="852086"/>
<dbReference type="KEGG" id="sce:YDR475C"/>
<dbReference type="AGR" id="SGD:S000002883"/>
<dbReference type="SGD" id="S000002883">
    <property type="gene designation" value="JIP4"/>
</dbReference>
<dbReference type="VEuPathDB" id="FungiDB:YDR475C"/>
<dbReference type="eggNOG" id="ENOG502RISH">
    <property type="taxonomic scope" value="Eukaryota"/>
</dbReference>
<dbReference type="GeneTree" id="ENSGT00940000176733"/>
<dbReference type="HOGENOM" id="CLU_012887_0_0_1"/>
<dbReference type="InParanoid" id="Q03361"/>
<dbReference type="OMA" id="IEWTSGY"/>
<dbReference type="OrthoDB" id="843225at2759"/>
<dbReference type="BioCyc" id="YEAST:G3O-30001-MONOMER"/>
<dbReference type="Reactome" id="R-SCE-159236">
    <property type="pathway name" value="Transport of Mature mRNA derived from an Intron-Containing Transcript"/>
</dbReference>
<dbReference type="BioGRID-ORCS" id="852086">
    <property type="hits" value="0 hits in 10 CRISPR screens"/>
</dbReference>
<dbReference type="PRO" id="PR:Q03361"/>
<dbReference type="Proteomes" id="UP000002311">
    <property type="component" value="Chromosome IV"/>
</dbReference>
<dbReference type="RNAct" id="Q03361">
    <property type="molecule type" value="protein"/>
</dbReference>
<dbReference type="GO" id="GO:0005681">
    <property type="term" value="C:spliceosomal complex"/>
    <property type="evidence" value="ECO:0000318"/>
    <property type="project" value="GO_Central"/>
</dbReference>
<dbReference type="GO" id="GO:0003723">
    <property type="term" value="F:RNA binding"/>
    <property type="evidence" value="ECO:0000318"/>
    <property type="project" value="GO_Central"/>
</dbReference>
<dbReference type="GO" id="GO:0048024">
    <property type="term" value="P:regulation of mRNA splicing, via spliceosome"/>
    <property type="evidence" value="ECO:0000318"/>
    <property type="project" value="GO_Central"/>
</dbReference>
<dbReference type="InterPro" id="IPR052225">
    <property type="entry name" value="Ser/Arg_repetitive_matrix"/>
</dbReference>
<dbReference type="PANTHER" id="PTHR23148">
    <property type="entry name" value="SERINE/ARGININE REGULATED NUCLEAR MATRIX PROTEIN"/>
    <property type="match status" value="1"/>
</dbReference>
<dbReference type="PANTHER" id="PTHR23148:SF0">
    <property type="entry name" value="SERINE_ARGININE REPETITIVE MATRIX PROTEIN 1"/>
    <property type="match status" value="1"/>
</dbReference>
<proteinExistence type="evidence at protein level"/>
<evidence type="ECO:0000256" key="1">
    <source>
        <dbReference type="SAM" id="MobiDB-lite"/>
    </source>
</evidence>
<evidence type="ECO:0000305" key="2"/>
<evidence type="ECO:0007744" key="3">
    <source>
    </source>
</evidence>
<evidence type="ECO:0007744" key="4">
    <source>
    </source>
</evidence>
<evidence type="ECO:0007744" key="5">
    <source>
    </source>
</evidence>
<name>JIP4_YEAST</name>
<accession>Q03361</accession>
<accession>D6VT98</accession>
<accession>Q66RD2</accession>